<name>BIOB_PSEE4</name>
<protein>
    <recommendedName>
        <fullName evidence="1">Biotin synthase</fullName>
        <ecNumber evidence="1">2.8.1.6</ecNumber>
    </recommendedName>
</protein>
<keyword id="KW-0001">2Fe-2S</keyword>
<keyword id="KW-0004">4Fe-4S</keyword>
<keyword id="KW-0093">Biotin biosynthesis</keyword>
<keyword id="KW-0408">Iron</keyword>
<keyword id="KW-0411">Iron-sulfur</keyword>
<keyword id="KW-0479">Metal-binding</keyword>
<keyword id="KW-0949">S-adenosyl-L-methionine</keyword>
<keyword id="KW-0808">Transferase</keyword>
<proteinExistence type="inferred from homology"/>
<comment type="function">
    <text evidence="1">Catalyzes the conversion of dethiobiotin (DTB) to biotin by the insertion of a sulfur atom into dethiobiotin via a radical-based mechanism.</text>
</comment>
<comment type="catalytic activity">
    <reaction evidence="1">
        <text>(4R,5S)-dethiobiotin + (sulfur carrier)-SH + 2 reduced [2Fe-2S]-[ferredoxin] + 2 S-adenosyl-L-methionine = (sulfur carrier)-H + biotin + 2 5'-deoxyadenosine + 2 L-methionine + 2 oxidized [2Fe-2S]-[ferredoxin]</text>
        <dbReference type="Rhea" id="RHEA:22060"/>
        <dbReference type="Rhea" id="RHEA-COMP:10000"/>
        <dbReference type="Rhea" id="RHEA-COMP:10001"/>
        <dbReference type="Rhea" id="RHEA-COMP:14737"/>
        <dbReference type="Rhea" id="RHEA-COMP:14739"/>
        <dbReference type="ChEBI" id="CHEBI:17319"/>
        <dbReference type="ChEBI" id="CHEBI:29917"/>
        <dbReference type="ChEBI" id="CHEBI:33737"/>
        <dbReference type="ChEBI" id="CHEBI:33738"/>
        <dbReference type="ChEBI" id="CHEBI:57586"/>
        <dbReference type="ChEBI" id="CHEBI:57844"/>
        <dbReference type="ChEBI" id="CHEBI:59789"/>
        <dbReference type="ChEBI" id="CHEBI:64428"/>
        <dbReference type="ChEBI" id="CHEBI:149473"/>
        <dbReference type="EC" id="2.8.1.6"/>
    </reaction>
</comment>
<comment type="cofactor">
    <cofactor evidence="1">
        <name>[4Fe-4S] cluster</name>
        <dbReference type="ChEBI" id="CHEBI:49883"/>
    </cofactor>
    <text evidence="1">Binds 1 [4Fe-4S] cluster. The cluster is coordinated with 3 cysteines and an exchangeable S-adenosyl-L-methionine.</text>
</comment>
<comment type="cofactor">
    <cofactor evidence="1">
        <name>[2Fe-2S] cluster</name>
        <dbReference type="ChEBI" id="CHEBI:190135"/>
    </cofactor>
    <text evidence="1">Binds 1 [2Fe-2S] cluster. The cluster is coordinated with 3 cysteines and 1 arginine.</text>
</comment>
<comment type="pathway">
    <text evidence="1">Cofactor biosynthesis; biotin biosynthesis; biotin from 7,8-diaminononanoate: step 2/2.</text>
</comment>
<comment type="subunit">
    <text evidence="1">Homodimer.</text>
</comment>
<comment type="similarity">
    <text evidence="1">Belongs to the radical SAM superfamily. Biotin synthase family.</text>
</comment>
<reference key="1">
    <citation type="journal article" date="2006" name="Nat. Biotechnol.">
        <title>Complete genome sequence of the entomopathogenic and metabolically versatile soil bacterium Pseudomonas entomophila.</title>
        <authorList>
            <person name="Vodovar N."/>
            <person name="Vallenet D."/>
            <person name="Cruveiller S."/>
            <person name="Rouy Z."/>
            <person name="Barbe V."/>
            <person name="Acosta C."/>
            <person name="Cattolico L."/>
            <person name="Jubin C."/>
            <person name="Lajus A."/>
            <person name="Segurens B."/>
            <person name="Vacherie B."/>
            <person name="Wincker P."/>
            <person name="Weissenbach J."/>
            <person name="Lemaitre B."/>
            <person name="Medigue C."/>
            <person name="Boccard F."/>
        </authorList>
    </citation>
    <scope>NUCLEOTIDE SEQUENCE [LARGE SCALE GENOMIC DNA]</scope>
    <source>
        <strain>L48</strain>
    </source>
</reference>
<gene>
    <name evidence="1" type="primary">bioB</name>
    <name type="ordered locus">PSEEN5121</name>
</gene>
<accession>Q1I3N6</accession>
<dbReference type="EC" id="2.8.1.6" evidence="1"/>
<dbReference type="EMBL" id="CT573326">
    <property type="protein sequence ID" value="CAK17750.1"/>
    <property type="molecule type" value="Genomic_DNA"/>
</dbReference>
<dbReference type="RefSeq" id="WP_011536109.1">
    <property type="nucleotide sequence ID" value="NC_008027.1"/>
</dbReference>
<dbReference type="SMR" id="Q1I3N6"/>
<dbReference type="STRING" id="384676.PSEEN5121"/>
<dbReference type="GeneID" id="32808054"/>
<dbReference type="KEGG" id="pen:PSEEN5121"/>
<dbReference type="eggNOG" id="COG0502">
    <property type="taxonomic scope" value="Bacteria"/>
</dbReference>
<dbReference type="HOGENOM" id="CLU_033172_1_2_6"/>
<dbReference type="OrthoDB" id="9786826at2"/>
<dbReference type="UniPathway" id="UPA00078">
    <property type="reaction ID" value="UER00162"/>
</dbReference>
<dbReference type="Proteomes" id="UP000000658">
    <property type="component" value="Chromosome"/>
</dbReference>
<dbReference type="GO" id="GO:0051537">
    <property type="term" value="F:2 iron, 2 sulfur cluster binding"/>
    <property type="evidence" value="ECO:0007669"/>
    <property type="project" value="UniProtKB-KW"/>
</dbReference>
<dbReference type="GO" id="GO:0051539">
    <property type="term" value="F:4 iron, 4 sulfur cluster binding"/>
    <property type="evidence" value="ECO:0007669"/>
    <property type="project" value="UniProtKB-KW"/>
</dbReference>
<dbReference type="GO" id="GO:0004076">
    <property type="term" value="F:biotin synthase activity"/>
    <property type="evidence" value="ECO:0007669"/>
    <property type="project" value="UniProtKB-UniRule"/>
</dbReference>
<dbReference type="GO" id="GO:0005506">
    <property type="term" value="F:iron ion binding"/>
    <property type="evidence" value="ECO:0007669"/>
    <property type="project" value="UniProtKB-UniRule"/>
</dbReference>
<dbReference type="GO" id="GO:0009102">
    <property type="term" value="P:biotin biosynthetic process"/>
    <property type="evidence" value="ECO:0007669"/>
    <property type="project" value="UniProtKB-UniRule"/>
</dbReference>
<dbReference type="CDD" id="cd01335">
    <property type="entry name" value="Radical_SAM"/>
    <property type="match status" value="1"/>
</dbReference>
<dbReference type="FunFam" id="3.20.20.70:FF:000011">
    <property type="entry name" value="Biotin synthase"/>
    <property type="match status" value="1"/>
</dbReference>
<dbReference type="Gene3D" id="3.20.20.70">
    <property type="entry name" value="Aldolase class I"/>
    <property type="match status" value="1"/>
</dbReference>
<dbReference type="HAMAP" id="MF_01694">
    <property type="entry name" value="BioB"/>
    <property type="match status" value="1"/>
</dbReference>
<dbReference type="InterPro" id="IPR013785">
    <property type="entry name" value="Aldolase_TIM"/>
</dbReference>
<dbReference type="InterPro" id="IPR010722">
    <property type="entry name" value="BATS_dom"/>
</dbReference>
<dbReference type="InterPro" id="IPR002684">
    <property type="entry name" value="Biotin_synth/BioAB"/>
</dbReference>
<dbReference type="InterPro" id="IPR024177">
    <property type="entry name" value="Biotin_synthase"/>
</dbReference>
<dbReference type="InterPro" id="IPR006638">
    <property type="entry name" value="Elp3/MiaA/NifB-like_rSAM"/>
</dbReference>
<dbReference type="InterPro" id="IPR007197">
    <property type="entry name" value="rSAM"/>
</dbReference>
<dbReference type="NCBIfam" id="TIGR00433">
    <property type="entry name" value="bioB"/>
    <property type="match status" value="1"/>
</dbReference>
<dbReference type="PANTHER" id="PTHR22976">
    <property type="entry name" value="BIOTIN SYNTHASE"/>
    <property type="match status" value="1"/>
</dbReference>
<dbReference type="PANTHER" id="PTHR22976:SF2">
    <property type="entry name" value="BIOTIN SYNTHASE, MITOCHONDRIAL"/>
    <property type="match status" value="1"/>
</dbReference>
<dbReference type="Pfam" id="PF06968">
    <property type="entry name" value="BATS"/>
    <property type="match status" value="1"/>
</dbReference>
<dbReference type="Pfam" id="PF04055">
    <property type="entry name" value="Radical_SAM"/>
    <property type="match status" value="1"/>
</dbReference>
<dbReference type="PIRSF" id="PIRSF001619">
    <property type="entry name" value="Biotin_synth"/>
    <property type="match status" value="1"/>
</dbReference>
<dbReference type="SFLD" id="SFLDG01060">
    <property type="entry name" value="BATS_domain_containing"/>
    <property type="match status" value="1"/>
</dbReference>
<dbReference type="SFLD" id="SFLDF00272">
    <property type="entry name" value="biotin_synthase"/>
    <property type="match status" value="1"/>
</dbReference>
<dbReference type="SMART" id="SM00876">
    <property type="entry name" value="BATS"/>
    <property type="match status" value="1"/>
</dbReference>
<dbReference type="SMART" id="SM00729">
    <property type="entry name" value="Elp3"/>
    <property type="match status" value="1"/>
</dbReference>
<dbReference type="SUPFAM" id="SSF102114">
    <property type="entry name" value="Radical SAM enzymes"/>
    <property type="match status" value="1"/>
</dbReference>
<dbReference type="PROSITE" id="PS51918">
    <property type="entry name" value="RADICAL_SAM"/>
    <property type="match status" value="1"/>
</dbReference>
<sequence>MSASAIATTRHDWSLAEVKALFQQPFNDLLFQAQTMHRAYFDPNRVQVSTLLSIKTGACPEDCKYCPQSGHYNTGLEKQKLMEVQKVLEEAARAKAIGSTRFCMGAAWKHPSAKDMPYVLEMVKGVKAMGLETCMTLGKLDQEQTLALAQAGLDYYNHNLDTSPEFYGSIITTRTYSERLQTLAYVRDAGMKICSGGILGMGESLDDRAGLLIQLANLPEHPESVPINMLVKVAGTPLAEEEDVDPFDFIRMLAVARILMPKSHVRLSAGREQMNEQMQALAFMAGANSIFYGEKLLTTANPQADKDMQLFARLGIKPEAREEHADEVHQAAIEQALVEQRNSELFYDAASA</sequence>
<organism>
    <name type="scientific">Pseudomonas entomophila (strain L48)</name>
    <dbReference type="NCBI Taxonomy" id="384676"/>
    <lineage>
        <taxon>Bacteria</taxon>
        <taxon>Pseudomonadati</taxon>
        <taxon>Pseudomonadota</taxon>
        <taxon>Gammaproteobacteria</taxon>
        <taxon>Pseudomonadales</taxon>
        <taxon>Pseudomonadaceae</taxon>
        <taxon>Pseudomonas</taxon>
    </lineage>
</organism>
<evidence type="ECO:0000255" key="1">
    <source>
        <dbReference type="HAMAP-Rule" id="MF_01694"/>
    </source>
</evidence>
<evidence type="ECO:0000255" key="2">
    <source>
        <dbReference type="PROSITE-ProRule" id="PRU01266"/>
    </source>
</evidence>
<feature type="chain" id="PRO_0000381556" description="Biotin synthase">
    <location>
        <begin position="1"/>
        <end position="352"/>
    </location>
</feature>
<feature type="domain" description="Radical SAM core" evidence="2">
    <location>
        <begin position="44"/>
        <end position="262"/>
    </location>
</feature>
<feature type="binding site" evidence="1">
    <location>
        <position position="59"/>
    </location>
    <ligand>
        <name>[4Fe-4S] cluster</name>
        <dbReference type="ChEBI" id="CHEBI:49883"/>
        <note>4Fe-4S-S-AdoMet</note>
    </ligand>
</feature>
<feature type="binding site" evidence="1">
    <location>
        <position position="63"/>
    </location>
    <ligand>
        <name>[4Fe-4S] cluster</name>
        <dbReference type="ChEBI" id="CHEBI:49883"/>
        <note>4Fe-4S-S-AdoMet</note>
    </ligand>
</feature>
<feature type="binding site" evidence="1">
    <location>
        <position position="66"/>
    </location>
    <ligand>
        <name>[4Fe-4S] cluster</name>
        <dbReference type="ChEBI" id="CHEBI:49883"/>
        <note>4Fe-4S-S-AdoMet</note>
    </ligand>
</feature>
<feature type="binding site" evidence="1">
    <location>
        <position position="103"/>
    </location>
    <ligand>
        <name>[2Fe-2S] cluster</name>
        <dbReference type="ChEBI" id="CHEBI:190135"/>
    </ligand>
</feature>
<feature type="binding site" evidence="1">
    <location>
        <position position="134"/>
    </location>
    <ligand>
        <name>[2Fe-2S] cluster</name>
        <dbReference type="ChEBI" id="CHEBI:190135"/>
    </ligand>
</feature>
<feature type="binding site" evidence="1">
    <location>
        <position position="194"/>
    </location>
    <ligand>
        <name>[2Fe-2S] cluster</name>
        <dbReference type="ChEBI" id="CHEBI:190135"/>
    </ligand>
</feature>
<feature type="binding site" evidence="1">
    <location>
        <position position="266"/>
    </location>
    <ligand>
        <name>[2Fe-2S] cluster</name>
        <dbReference type="ChEBI" id="CHEBI:190135"/>
    </ligand>
</feature>